<accession>A2R475</accession>
<sequence length="366" mass="41184">MPGKELPDRCMNCHEAEPAFLLRERHVCQECYIRFLNFKPFRRMERYRLRRNMPQTGPCKLLLPLSYGVSSTVLLHMLHRQLEALRSKKHGPAGFEILVLVVEPSTISPVPPHEEGFALAQQTFPLCSFTRLPFHSIFELDPDVHQIMSQYAGEHFTDDTSLSDEERLNRFRRSITTATSKSDVDQILLNKLVVAFAKKMECRGIVWGDSDSKLAAKTLANVAKGRGSAVTWQVCDGMSPFGLEFNFPLRDVFTAEIRTYATLFPELAGIIVHDEPPSENTLTKNLSIDELMIRYVSTQGEKYPGVMLNVTRTASKLQSSGTSIGGLQCNFCGAFMTTNENITGEQGNEQLQFCYACARSQPELSC</sequence>
<proteinExistence type="inferred from homology"/>
<gene>
    <name type="primary">ncs2</name>
    <name type="synonym">ctu2</name>
    <name type="ORF">An14g06820</name>
</gene>
<dbReference type="EMBL" id="AM270327">
    <property type="protein sequence ID" value="CAK46675.1"/>
    <property type="molecule type" value="Genomic_DNA"/>
</dbReference>
<dbReference type="RefSeq" id="XP_001401305.1">
    <property type="nucleotide sequence ID" value="XM_001401268.1"/>
</dbReference>
<dbReference type="EnsemblFungi" id="CAK46675">
    <property type="protein sequence ID" value="CAK46675"/>
    <property type="gene ID" value="An14g06820"/>
</dbReference>
<dbReference type="GeneID" id="4987540"/>
<dbReference type="KEGG" id="ang:An14g06820"/>
<dbReference type="VEuPathDB" id="FungiDB:An14g06820"/>
<dbReference type="HOGENOM" id="CLU_024534_3_0_1"/>
<dbReference type="UniPathway" id="UPA00988"/>
<dbReference type="Proteomes" id="UP000006706">
    <property type="component" value="Chromosome 1R"/>
</dbReference>
<dbReference type="GO" id="GO:0005829">
    <property type="term" value="C:cytosol"/>
    <property type="evidence" value="ECO:0000250"/>
    <property type="project" value="UniProtKB"/>
</dbReference>
<dbReference type="GO" id="GO:0016779">
    <property type="term" value="F:nucleotidyltransferase activity"/>
    <property type="evidence" value="ECO:0007669"/>
    <property type="project" value="UniProtKB-UniRule"/>
</dbReference>
<dbReference type="GO" id="GO:0016783">
    <property type="term" value="F:sulfurtransferase activity"/>
    <property type="evidence" value="ECO:0007669"/>
    <property type="project" value="TreeGrafter"/>
</dbReference>
<dbReference type="GO" id="GO:0000049">
    <property type="term" value="F:tRNA binding"/>
    <property type="evidence" value="ECO:0007669"/>
    <property type="project" value="InterPro"/>
</dbReference>
<dbReference type="GO" id="GO:0032447">
    <property type="term" value="P:protein urmylation"/>
    <property type="evidence" value="ECO:0007669"/>
    <property type="project" value="UniProtKB-UniRule"/>
</dbReference>
<dbReference type="GO" id="GO:0034227">
    <property type="term" value="P:tRNA thio-modification"/>
    <property type="evidence" value="ECO:0000250"/>
    <property type="project" value="UniProtKB"/>
</dbReference>
<dbReference type="GO" id="GO:0002143">
    <property type="term" value="P:tRNA wobble position uridine thiolation"/>
    <property type="evidence" value="ECO:0007669"/>
    <property type="project" value="TreeGrafter"/>
</dbReference>
<dbReference type="GO" id="GO:0002098">
    <property type="term" value="P:tRNA wobble uridine modification"/>
    <property type="evidence" value="ECO:0000250"/>
    <property type="project" value="UniProtKB"/>
</dbReference>
<dbReference type="FunFam" id="3.40.50.620:FF:000143">
    <property type="entry name" value="Cytoplasmic tRNA 2-thiolation protein 2"/>
    <property type="match status" value="1"/>
</dbReference>
<dbReference type="Gene3D" id="3.40.50.620">
    <property type="entry name" value="HUPs"/>
    <property type="match status" value="1"/>
</dbReference>
<dbReference type="HAMAP" id="MF_03054">
    <property type="entry name" value="CTU2"/>
    <property type="match status" value="1"/>
</dbReference>
<dbReference type="InterPro" id="IPR019407">
    <property type="entry name" value="CTU2"/>
</dbReference>
<dbReference type="InterPro" id="IPR014729">
    <property type="entry name" value="Rossmann-like_a/b/a_fold"/>
</dbReference>
<dbReference type="PANTHER" id="PTHR20882">
    <property type="entry name" value="CYTOPLASMIC TRNA 2-THIOLATION PROTEIN 2"/>
    <property type="match status" value="1"/>
</dbReference>
<dbReference type="PANTHER" id="PTHR20882:SF14">
    <property type="entry name" value="CYTOPLASMIC TRNA 2-THIOLATION PROTEIN 2"/>
    <property type="match status" value="1"/>
</dbReference>
<dbReference type="Pfam" id="PF10288">
    <property type="entry name" value="CTU2"/>
    <property type="match status" value="1"/>
</dbReference>
<dbReference type="SUPFAM" id="SSF52402">
    <property type="entry name" value="Adenine nucleotide alpha hydrolases-like"/>
    <property type="match status" value="1"/>
</dbReference>
<keyword id="KW-0963">Cytoplasm</keyword>
<keyword id="KW-1185">Reference proteome</keyword>
<keyword id="KW-0819">tRNA processing</keyword>
<organism>
    <name type="scientific">Aspergillus niger (strain ATCC MYA-4892 / CBS 513.88 / FGSC A1513)</name>
    <dbReference type="NCBI Taxonomy" id="425011"/>
    <lineage>
        <taxon>Eukaryota</taxon>
        <taxon>Fungi</taxon>
        <taxon>Dikarya</taxon>
        <taxon>Ascomycota</taxon>
        <taxon>Pezizomycotina</taxon>
        <taxon>Eurotiomycetes</taxon>
        <taxon>Eurotiomycetidae</taxon>
        <taxon>Eurotiales</taxon>
        <taxon>Aspergillaceae</taxon>
        <taxon>Aspergillus</taxon>
        <taxon>Aspergillus subgen. Circumdati</taxon>
    </lineage>
</organism>
<feature type="chain" id="PRO_0000369290" description="Cytoplasmic tRNA 2-thiolation protein 2">
    <location>
        <begin position="1"/>
        <end position="366"/>
    </location>
</feature>
<comment type="function">
    <text evidence="1">Plays a central role in 2-thiolation of mcm(5)S(2)U at tRNA wobble positions of tRNA(Lys), tRNA(Glu) and tRNA(Gln). May act by forming a heterodimer with ncs6 that ligates sulfur from thiocarboxylated urm1 onto the uridine of tRNAs at wobble position. Prior mcm(5) tRNA modification by the elongator complex is required for 2-thiolation. May also be involved in protein urmylation.</text>
</comment>
<comment type="pathway">
    <text evidence="1">tRNA modification; 5-methoxycarbonylmethyl-2-thiouridine-tRNA biosynthesis.</text>
</comment>
<comment type="subcellular location">
    <subcellularLocation>
        <location evidence="1">Cytoplasm</location>
    </subcellularLocation>
</comment>
<comment type="similarity">
    <text evidence="1">Belongs to the CTU2/NCS2 family.</text>
</comment>
<reference key="1">
    <citation type="journal article" date="2007" name="Nat. Biotechnol.">
        <title>Genome sequencing and analysis of the versatile cell factory Aspergillus niger CBS 513.88.</title>
        <authorList>
            <person name="Pel H.J."/>
            <person name="de Winde J.H."/>
            <person name="Archer D.B."/>
            <person name="Dyer P.S."/>
            <person name="Hofmann G."/>
            <person name="Schaap P.J."/>
            <person name="Turner G."/>
            <person name="de Vries R.P."/>
            <person name="Albang R."/>
            <person name="Albermann K."/>
            <person name="Andersen M.R."/>
            <person name="Bendtsen J.D."/>
            <person name="Benen J.A.E."/>
            <person name="van den Berg M."/>
            <person name="Breestraat S."/>
            <person name="Caddick M.X."/>
            <person name="Contreras R."/>
            <person name="Cornell M."/>
            <person name="Coutinho P.M."/>
            <person name="Danchin E.G.J."/>
            <person name="Debets A.J.M."/>
            <person name="Dekker P."/>
            <person name="van Dijck P.W.M."/>
            <person name="van Dijk A."/>
            <person name="Dijkhuizen L."/>
            <person name="Driessen A.J.M."/>
            <person name="d'Enfert C."/>
            <person name="Geysens S."/>
            <person name="Goosen C."/>
            <person name="Groot G.S.P."/>
            <person name="de Groot P.W.J."/>
            <person name="Guillemette T."/>
            <person name="Henrissat B."/>
            <person name="Herweijer M."/>
            <person name="van den Hombergh J.P.T.W."/>
            <person name="van den Hondel C.A.M.J.J."/>
            <person name="van der Heijden R.T.J.M."/>
            <person name="van der Kaaij R.M."/>
            <person name="Klis F.M."/>
            <person name="Kools H.J."/>
            <person name="Kubicek C.P."/>
            <person name="van Kuyk P.A."/>
            <person name="Lauber J."/>
            <person name="Lu X."/>
            <person name="van der Maarel M.J.E.C."/>
            <person name="Meulenberg R."/>
            <person name="Menke H."/>
            <person name="Mortimer M.A."/>
            <person name="Nielsen J."/>
            <person name="Oliver S.G."/>
            <person name="Olsthoorn M."/>
            <person name="Pal K."/>
            <person name="van Peij N.N.M.E."/>
            <person name="Ram A.F.J."/>
            <person name="Rinas U."/>
            <person name="Roubos J.A."/>
            <person name="Sagt C.M.J."/>
            <person name="Schmoll M."/>
            <person name="Sun J."/>
            <person name="Ussery D."/>
            <person name="Varga J."/>
            <person name="Vervecken W."/>
            <person name="van de Vondervoort P.J.J."/>
            <person name="Wedler H."/>
            <person name="Woesten H.A.B."/>
            <person name="Zeng A.-P."/>
            <person name="van Ooyen A.J.J."/>
            <person name="Visser J."/>
            <person name="Stam H."/>
        </authorList>
    </citation>
    <scope>NUCLEOTIDE SEQUENCE [LARGE SCALE GENOMIC DNA]</scope>
    <source>
        <strain>ATCC MYA-4892 / CBS 513.88 / FGSC A1513</strain>
    </source>
</reference>
<protein>
    <recommendedName>
        <fullName evidence="1">Cytoplasmic tRNA 2-thiolation protein 2</fullName>
    </recommendedName>
</protein>
<evidence type="ECO:0000255" key="1">
    <source>
        <dbReference type="HAMAP-Rule" id="MF_03054"/>
    </source>
</evidence>
<name>CTU2_ASPNC</name>